<evidence type="ECO:0000250" key="1">
    <source>
        <dbReference type="UniProtKB" id="Q5U4F4"/>
    </source>
</evidence>
<evidence type="ECO:0000250" key="2">
    <source>
        <dbReference type="UniProtKB" id="Q86UB9"/>
    </source>
</evidence>
<evidence type="ECO:0000250" key="3">
    <source>
        <dbReference type="UniProtKB" id="Q9CYV5"/>
    </source>
</evidence>
<evidence type="ECO:0000255" key="4"/>
<evidence type="ECO:0000305" key="5"/>
<reference key="1">
    <citation type="submission" date="2005-08" db="EMBL/GenBank/DDBJ databases">
        <authorList>
            <consortium name="NIH - Mammalian Gene Collection (MGC) project"/>
        </authorList>
    </citation>
    <scope>NUCLEOTIDE SEQUENCE [LARGE SCALE MRNA]</scope>
    <source>
        <strain>Crossbred X Angus</strain>
        <tissue>Ileum</tissue>
    </source>
</reference>
<dbReference type="EMBL" id="BC103393">
    <property type="protein sequence ID" value="AAI03394.1"/>
    <property type="molecule type" value="mRNA"/>
</dbReference>
<dbReference type="RefSeq" id="NP_001030425.1">
    <property type="nucleotide sequence ID" value="NM_001035348.1"/>
</dbReference>
<dbReference type="FunCoup" id="Q3ZBE6">
    <property type="interactions" value="1929"/>
</dbReference>
<dbReference type="STRING" id="9913.ENSBTAP00000074445"/>
<dbReference type="PaxDb" id="9913-ENSBTAP00000007209"/>
<dbReference type="Ensembl" id="ENSBTAT00000085727.2">
    <property type="protein sequence ID" value="ENSBTAP00000074445.1"/>
    <property type="gene ID" value="ENSBTAG00000005482.7"/>
</dbReference>
<dbReference type="GeneID" id="523885"/>
<dbReference type="KEGG" id="bta:523885"/>
<dbReference type="CTD" id="65084"/>
<dbReference type="VEuPathDB" id="HostDB:ENSBTAG00000005482"/>
<dbReference type="VGNC" id="VGNC:56288">
    <property type="gene designation" value="TMEM135"/>
</dbReference>
<dbReference type="eggNOG" id="KOG1398">
    <property type="taxonomic scope" value="Eukaryota"/>
</dbReference>
<dbReference type="GeneTree" id="ENSGT00390000000303"/>
<dbReference type="InParanoid" id="Q3ZBE6"/>
<dbReference type="OMA" id="HPWTDKC"/>
<dbReference type="OrthoDB" id="291792at2759"/>
<dbReference type="Proteomes" id="UP000009136">
    <property type="component" value="Chromosome 29"/>
</dbReference>
<dbReference type="Bgee" id="ENSBTAG00000005482">
    <property type="expression patterns" value="Expressed in liver and 106 other cell types or tissues"/>
</dbReference>
<dbReference type="GO" id="GO:0005811">
    <property type="term" value="C:lipid droplet"/>
    <property type="evidence" value="ECO:0007669"/>
    <property type="project" value="Ensembl"/>
</dbReference>
<dbReference type="GO" id="GO:0031966">
    <property type="term" value="C:mitochondrial membrane"/>
    <property type="evidence" value="ECO:0007669"/>
    <property type="project" value="UniProtKB-SubCell"/>
</dbReference>
<dbReference type="GO" id="GO:0005739">
    <property type="term" value="C:mitochondrion"/>
    <property type="evidence" value="ECO:0000250"/>
    <property type="project" value="UniProtKB"/>
</dbReference>
<dbReference type="GO" id="GO:0005778">
    <property type="term" value="C:peroxisomal membrane"/>
    <property type="evidence" value="ECO:0007669"/>
    <property type="project" value="UniProtKB-SubCell"/>
</dbReference>
<dbReference type="GO" id="GO:0005319">
    <property type="term" value="F:lipid transporter activity"/>
    <property type="evidence" value="ECO:0007669"/>
    <property type="project" value="Ensembl"/>
</dbReference>
<dbReference type="GO" id="GO:0036109">
    <property type="term" value="P:alpha-linolenic acid metabolic process"/>
    <property type="evidence" value="ECO:0007669"/>
    <property type="project" value="Ensembl"/>
</dbReference>
<dbReference type="GO" id="GO:1901570">
    <property type="term" value="P:fatty acid derivative biosynthetic process"/>
    <property type="evidence" value="ECO:0007669"/>
    <property type="project" value="Ensembl"/>
</dbReference>
<dbReference type="GO" id="GO:1901571">
    <property type="term" value="P:fatty acid derivative transport"/>
    <property type="evidence" value="ECO:0007669"/>
    <property type="project" value="Ensembl"/>
</dbReference>
<dbReference type="GO" id="GO:0042759">
    <property type="term" value="P:long-chain fatty acid biosynthetic process"/>
    <property type="evidence" value="ECO:0007669"/>
    <property type="project" value="Ensembl"/>
</dbReference>
<dbReference type="GO" id="GO:0015909">
    <property type="term" value="P:long-chain fatty acid transport"/>
    <property type="evidence" value="ECO:0007669"/>
    <property type="project" value="Ensembl"/>
</dbReference>
<dbReference type="GO" id="GO:0007005">
    <property type="term" value="P:mitochondrion organization"/>
    <property type="evidence" value="ECO:0007669"/>
    <property type="project" value="Ensembl"/>
</dbReference>
<dbReference type="GO" id="GO:0090140">
    <property type="term" value="P:regulation of mitochondrial fission"/>
    <property type="evidence" value="ECO:0000250"/>
    <property type="project" value="UniProtKB"/>
</dbReference>
<dbReference type="GO" id="GO:0002082">
    <property type="term" value="P:regulation of oxidative phosphorylation"/>
    <property type="evidence" value="ECO:0007669"/>
    <property type="project" value="Ensembl"/>
</dbReference>
<dbReference type="GO" id="GO:0009409">
    <property type="term" value="P:response to cold"/>
    <property type="evidence" value="ECO:0007669"/>
    <property type="project" value="Ensembl"/>
</dbReference>
<dbReference type="GO" id="GO:0032094">
    <property type="term" value="P:response to food"/>
    <property type="evidence" value="ECO:0007669"/>
    <property type="project" value="Ensembl"/>
</dbReference>
<dbReference type="GO" id="GO:0003406">
    <property type="term" value="P:retinal pigment epithelium development"/>
    <property type="evidence" value="ECO:0007669"/>
    <property type="project" value="Ensembl"/>
</dbReference>
<dbReference type="GO" id="GO:0006636">
    <property type="term" value="P:unsaturated fatty acid biosynthetic process"/>
    <property type="evidence" value="ECO:0007669"/>
    <property type="project" value="Ensembl"/>
</dbReference>
<dbReference type="InterPro" id="IPR026749">
    <property type="entry name" value="Tmem135"/>
</dbReference>
<dbReference type="InterPro" id="IPR031926">
    <property type="entry name" value="TMEM135_N"/>
</dbReference>
<dbReference type="PANTHER" id="PTHR12459:SF15">
    <property type="entry name" value="TRANSMEMBRANE PROTEIN 135"/>
    <property type="match status" value="1"/>
</dbReference>
<dbReference type="PANTHER" id="PTHR12459">
    <property type="entry name" value="TRANSMEMBRANE PROTEIN 135-RELATED"/>
    <property type="match status" value="1"/>
</dbReference>
<dbReference type="Pfam" id="PF02466">
    <property type="entry name" value="Tim17"/>
    <property type="match status" value="1"/>
</dbReference>
<dbReference type="Pfam" id="PF15982">
    <property type="entry name" value="TMEM135_C_rich"/>
    <property type="match status" value="1"/>
</dbReference>
<feature type="chain" id="PRO_0000284621" description="Transmembrane protein 135">
    <location>
        <begin position="1"/>
        <end position="458"/>
    </location>
</feature>
<feature type="transmembrane region" description="Helical" evidence="4">
    <location>
        <begin position="68"/>
        <end position="88"/>
    </location>
</feature>
<feature type="transmembrane region" description="Helical" evidence="4">
    <location>
        <begin position="96"/>
        <end position="116"/>
    </location>
</feature>
<feature type="transmembrane region" description="Helical" evidence="4">
    <location>
        <begin position="149"/>
        <end position="169"/>
    </location>
</feature>
<feature type="transmembrane region" description="Helical" evidence="4">
    <location>
        <begin position="298"/>
        <end position="318"/>
    </location>
</feature>
<feature type="transmembrane region" description="Helical" evidence="4">
    <location>
        <begin position="331"/>
        <end position="351"/>
    </location>
</feature>
<feature type="transmembrane region" description="Helical" evidence="4">
    <location>
        <begin position="380"/>
        <end position="400"/>
    </location>
</feature>
<keyword id="KW-0472">Membrane</keyword>
<keyword id="KW-0496">Mitochondrion</keyword>
<keyword id="KW-0576">Peroxisome</keyword>
<keyword id="KW-1185">Reference proteome</keyword>
<keyword id="KW-0812">Transmembrane</keyword>
<keyword id="KW-1133">Transmembrane helix</keyword>
<sequence length="458" mass="52269">MAALSKSIPHNCYEIGHTWQPSCWLSFLHITRGALEESLKIYAPLYLIAAILRKRKLDYYLHKLLPEILQSASFLTANGALFMAFFCILRKILGKFYLWSPGFGAALPASYVAILVERKSRRGLLTIYMANLATETLFRMGVARGVITTLRNGEVLLFCITAAMYMFFFRCKDGLKGFTFSALRFIVGKEEIPTHSYSPEAAYAKVEQKTEKHEEKPRGMNIIALVRKLVDSVCKHGPRHRCCKHYEDNCISYCIKGFIRMFSVGYLIQCCLRIPSAFRHLFTQPSRLLSLFYNKENFQLGAFLGSFVSIYKGTSCFLRWVRNLDDELHAIIAGFLAGVSMMFYKSTTISMYLASKLVETMYFKGIEAGKVPYFPHADTIIYSISTAICFQAAVMEVQTLRPSYWKFLLRLTKGRFAVMNRKVLDVFGTGASKNFPDFTPRLDPRYTTVTPELPIEFS</sequence>
<name>TM135_BOVIN</name>
<proteinExistence type="evidence at transcript level"/>
<organism>
    <name type="scientific">Bos taurus</name>
    <name type="common">Bovine</name>
    <dbReference type="NCBI Taxonomy" id="9913"/>
    <lineage>
        <taxon>Eukaryota</taxon>
        <taxon>Metazoa</taxon>
        <taxon>Chordata</taxon>
        <taxon>Craniata</taxon>
        <taxon>Vertebrata</taxon>
        <taxon>Euteleostomi</taxon>
        <taxon>Mammalia</taxon>
        <taxon>Eutheria</taxon>
        <taxon>Laurasiatheria</taxon>
        <taxon>Artiodactyla</taxon>
        <taxon>Ruminantia</taxon>
        <taxon>Pecora</taxon>
        <taxon>Bovidae</taxon>
        <taxon>Bovinae</taxon>
        <taxon>Bos</taxon>
    </lineage>
</organism>
<accession>Q3ZBE6</accession>
<comment type="function">
    <text evidence="1 3">Involved in mitochondrial metabolism by regulating the balance between mitochondrial fusion and fission. May act as a regulator of mitochondrial fission that promotes DNM1L-dependent fission through activation of DNM1L. May be involved in peroxisome organization.</text>
</comment>
<comment type="subcellular location">
    <subcellularLocation>
        <location evidence="3">Mitochondrion membrane</location>
        <topology evidence="3">Multi-pass membrane protein</topology>
    </subcellularLocation>
    <subcellularLocation>
        <location evidence="3">Peroxisome membrane</location>
        <topology evidence="4">Multi-pass membrane protein</topology>
    </subcellularLocation>
</comment>
<comment type="similarity">
    <text evidence="5">Belongs to the TMEM135 family.</text>
</comment>
<gene>
    <name evidence="2" type="primary">TMEM135</name>
</gene>
<protein>
    <recommendedName>
        <fullName evidence="2">Transmembrane protein 135</fullName>
    </recommendedName>
</protein>